<keyword id="KW-0929">Antimicrobial</keyword>
<keyword id="KW-1015">Disulfide bond</keyword>
<keyword id="KW-0295">Fungicide</keyword>
<keyword id="KW-0611">Plant defense</keyword>
<keyword id="KW-1185">Reference proteome</keyword>
<keyword id="KW-0964">Secreted</keyword>
<keyword id="KW-0732">Signal</keyword>
<dbReference type="EMBL" id="AC010675">
    <property type="status" value="NOT_ANNOTATED_CDS"/>
    <property type="molecule type" value="Genomic_DNA"/>
</dbReference>
<dbReference type="EMBL" id="CP002684">
    <property type="protein sequence ID" value="AEE34982.1"/>
    <property type="molecule type" value="Genomic_DNA"/>
</dbReference>
<dbReference type="RefSeq" id="NP_001031259.1">
    <property type="nucleotide sequence ID" value="NM_001036182.1"/>
</dbReference>
<dbReference type="SMR" id="Q2V4D5"/>
<dbReference type="PaxDb" id="3702-AT1G69828.1"/>
<dbReference type="EnsemblPlants" id="AT1G69828.1">
    <property type="protein sequence ID" value="AT1G69828.1"/>
    <property type="gene ID" value="AT1G69828"/>
</dbReference>
<dbReference type="GeneID" id="3767681"/>
<dbReference type="Gramene" id="AT1G69828.1">
    <property type="protein sequence ID" value="AT1G69828.1"/>
    <property type="gene ID" value="AT1G69828"/>
</dbReference>
<dbReference type="KEGG" id="ath:AT1G69828"/>
<dbReference type="Araport" id="AT1G69828"/>
<dbReference type="TAIR" id="AT1G69828"/>
<dbReference type="HOGENOM" id="CLU_2725643_0_0_1"/>
<dbReference type="InParanoid" id="Q2V4D5"/>
<dbReference type="OMA" id="ECIESPI"/>
<dbReference type="PhylomeDB" id="Q2V4D5"/>
<dbReference type="PRO" id="PR:Q2V4D5"/>
<dbReference type="Proteomes" id="UP000006548">
    <property type="component" value="Chromosome 1"/>
</dbReference>
<dbReference type="ExpressionAtlas" id="Q2V4D5">
    <property type="expression patterns" value="baseline and differential"/>
</dbReference>
<dbReference type="GO" id="GO:0005576">
    <property type="term" value="C:extracellular region"/>
    <property type="evidence" value="ECO:0007669"/>
    <property type="project" value="UniProtKB-SubCell"/>
</dbReference>
<dbReference type="GO" id="GO:0050832">
    <property type="term" value="P:defense response to fungus"/>
    <property type="evidence" value="ECO:0007669"/>
    <property type="project" value="UniProtKB-KW"/>
</dbReference>
<dbReference type="GO" id="GO:0031640">
    <property type="term" value="P:killing of cells of another organism"/>
    <property type="evidence" value="ECO:0007669"/>
    <property type="project" value="UniProtKB-KW"/>
</dbReference>
<reference key="1">
    <citation type="journal article" date="2000" name="Nature">
        <title>Sequence and analysis of chromosome 1 of the plant Arabidopsis thaliana.</title>
        <authorList>
            <person name="Theologis A."/>
            <person name="Ecker J.R."/>
            <person name="Palm C.J."/>
            <person name="Federspiel N.A."/>
            <person name="Kaul S."/>
            <person name="White O."/>
            <person name="Alonso J."/>
            <person name="Altafi H."/>
            <person name="Araujo R."/>
            <person name="Bowman C.L."/>
            <person name="Brooks S.Y."/>
            <person name="Buehler E."/>
            <person name="Chan A."/>
            <person name="Chao Q."/>
            <person name="Chen H."/>
            <person name="Cheuk R.F."/>
            <person name="Chin C.W."/>
            <person name="Chung M.K."/>
            <person name="Conn L."/>
            <person name="Conway A.B."/>
            <person name="Conway A.R."/>
            <person name="Creasy T.H."/>
            <person name="Dewar K."/>
            <person name="Dunn P."/>
            <person name="Etgu P."/>
            <person name="Feldblyum T.V."/>
            <person name="Feng J.-D."/>
            <person name="Fong B."/>
            <person name="Fujii C.Y."/>
            <person name="Gill J.E."/>
            <person name="Goldsmith A.D."/>
            <person name="Haas B."/>
            <person name="Hansen N.F."/>
            <person name="Hughes B."/>
            <person name="Huizar L."/>
            <person name="Hunter J.L."/>
            <person name="Jenkins J."/>
            <person name="Johnson-Hopson C."/>
            <person name="Khan S."/>
            <person name="Khaykin E."/>
            <person name="Kim C.J."/>
            <person name="Koo H.L."/>
            <person name="Kremenetskaia I."/>
            <person name="Kurtz D.B."/>
            <person name="Kwan A."/>
            <person name="Lam B."/>
            <person name="Langin-Hooper S."/>
            <person name="Lee A."/>
            <person name="Lee J.M."/>
            <person name="Lenz C.A."/>
            <person name="Li J.H."/>
            <person name="Li Y.-P."/>
            <person name="Lin X."/>
            <person name="Liu S.X."/>
            <person name="Liu Z.A."/>
            <person name="Luros J.S."/>
            <person name="Maiti R."/>
            <person name="Marziali A."/>
            <person name="Militscher J."/>
            <person name="Miranda M."/>
            <person name="Nguyen M."/>
            <person name="Nierman W.C."/>
            <person name="Osborne B.I."/>
            <person name="Pai G."/>
            <person name="Peterson J."/>
            <person name="Pham P.K."/>
            <person name="Rizzo M."/>
            <person name="Rooney T."/>
            <person name="Rowley D."/>
            <person name="Sakano H."/>
            <person name="Salzberg S.L."/>
            <person name="Schwartz J.R."/>
            <person name="Shinn P."/>
            <person name="Southwick A.M."/>
            <person name="Sun H."/>
            <person name="Tallon L.J."/>
            <person name="Tambunga G."/>
            <person name="Toriumi M.J."/>
            <person name="Town C.D."/>
            <person name="Utterback T."/>
            <person name="Van Aken S."/>
            <person name="Vaysberg M."/>
            <person name="Vysotskaia V.S."/>
            <person name="Walker M."/>
            <person name="Wu D."/>
            <person name="Yu G."/>
            <person name="Fraser C.M."/>
            <person name="Venter J.C."/>
            <person name="Davis R.W."/>
        </authorList>
    </citation>
    <scope>NUCLEOTIDE SEQUENCE [LARGE SCALE GENOMIC DNA]</scope>
    <source>
        <strain>cv. Columbia</strain>
    </source>
</reference>
<reference key="2">
    <citation type="journal article" date="2017" name="Plant J.">
        <title>Araport11: a complete reannotation of the Arabidopsis thaliana reference genome.</title>
        <authorList>
            <person name="Cheng C.Y."/>
            <person name="Krishnakumar V."/>
            <person name="Chan A.P."/>
            <person name="Thibaud-Nissen F."/>
            <person name="Schobel S."/>
            <person name="Town C.D."/>
        </authorList>
    </citation>
    <scope>GENOME REANNOTATION</scope>
    <source>
        <strain>cv. Columbia</strain>
    </source>
</reference>
<reference key="3">
    <citation type="journal article" date="2005" name="Plant Physiol.">
        <title>Genome organization of more than 300 defensin-like genes in Arabidopsis.</title>
        <authorList>
            <person name="Silverstein K.A.T."/>
            <person name="Graham M.A."/>
            <person name="Paape T.D."/>
            <person name="VandenBosch K.A."/>
        </authorList>
    </citation>
    <scope>GENE FAMILY</scope>
</reference>
<comment type="subcellular location">
    <subcellularLocation>
        <location evidence="1">Secreted</location>
    </subcellularLocation>
</comment>
<comment type="similarity">
    <text evidence="3">Belongs to the DEFL family.</text>
</comment>
<comment type="caution">
    <text evidence="3">Lacks 1 of the 4 disulfide bonds, which are conserved features of the family.</text>
</comment>
<name>DEF36_ARATH</name>
<proteinExistence type="inferred from homology"/>
<protein>
    <recommendedName>
        <fullName>Putative defensin-like protein 36</fullName>
    </recommendedName>
</protein>
<sequence>MASNKVSFFLVLCLCILLAGECIESPIFTGNKCSDPTGMDKDGKCLDYCHAQGYPGGSCIGFIDQGYMCVCKVG</sequence>
<evidence type="ECO:0000250" key="1"/>
<evidence type="ECO:0000255" key="2"/>
<evidence type="ECO:0000305" key="3"/>
<gene>
    <name type="ordered locus">At1g69828</name>
    <name type="ORF">T17F3</name>
</gene>
<accession>Q2V4D5</accession>
<feature type="signal peptide" evidence="2">
    <location>
        <begin position="1"/>
        <end position="22"/>
    </location>
</feature>
<feature type="chain" id="PRO_0000379618" description="Putative defensin-like protein 36">
    <location>
        <begin position="23"/>
        <end position="74"/>
    </location>
</feature>
<feature type="disulfide bond" evidence="1">
    <location>
        <begin position="33"/>
        <end position="59"/>
    </location>
</feature>
<feature type="disulfide bond" evidence="1">
    <location>
        <begin position="45"/>
        <end position="69"/>
    </location>
</feature>
<feature type="disulfide bond" evidence="1">
    <location>
        <begin position="49"/>
        <end position="71"/>
    </location>
</feature>
<organism>
    <name type="scientific">Arabidopsis thaliana</name>
    <name type="common">Mouse-ear cress</name>
    <dbReference type="NCBI Taxonomy" id="3702"/>
    <lineage>
        <taxon>Eukaryota</taxon>
        <taxon>Viridiplantae</taxon>
        <taxon>Streptophyta</taxon>
        <taxon>Embryophyta</taxon>
        <taxon>Tracheophyta</taxon>
        <taxon>Spermatophyta</taxon>
        <taxon>Magnoliopsida</taxon>
        <taxon>eudicotyledons</taxon>
        <taxon>Gunneridae</taxon>
        <taxon>Pentapetalae</taxon>
        <taxon>rosids</taxon>
        <taxon>malvids</taxon>
        <taxon>Brassicales</taxon>
        <taxon>Brassicaceae</taxon>
        <taxon>Camelineae</taxon>
        <taxon>Arabidopsis</taxon>
    </lineage>
</organism>